<proteinExistence type="inferred from homology"/>
<comment type="function">
    <text evidence="1">One of the primary rRNA binding proteins, it binds directly to 16S rRNA central domain where it helps coordinate assembly of the platform of the 30S subunit.</text>
</comment>
<comment type="subunit">
    <text evidence="1">Part of the 30S ribosomal subunit. Contacts proteins S5 and S12.</text>
</comment>
<comment type="similarity">
    <text evidence="1">Belongs to the universal ribosomal protein uS8 family.</text>
</comment>
<sequence length="129" mass="14126">MDTISQFLTMIRNAGAAKHEKVDMPASKVRAGIAQILVNEGFIRSFKVAKDSKQGIMRVYLKYDEAGGHAINNIDRVSRPGRRVYVKSDKIPTVRSGMGMSIISTSKGIMSGKQATEQKLGGELLATLW</sequence>
<gene>
    <name evidence="1" type="primary">rpsH</name>
    <name type="ordered locus">Bd2963</name>
</gene>
<feature type="chain" id="PRO_0000290806" description="Small ribosomal subunit protein uS8">
    <location>
        <begin position="1"/>
        <end position="129"/>
    </location>
</feature>
<protein>
    <recommendedName>
        <fullName evidence="1">Small ribosomal subunit protein uS8</fullName>
    </recommendedName>
    <alternativeName>
        <fullName evidence="2">30S ribosomal protein S8</fullName>
    </alternativeName>
</protein>
<dbReference type="EMBL" id="BX842654">
    <property type="protein sequence ID" value="CAE80736.1"/>
    <property type="molecule type" value="Genomic_DNA"/>
</dbReference>
<dbReference type="RefSeq" id="WP_011165340.1">
    <property type="nucleotide sequence ID" value="NC_005363.1"/>
</dbReference>
<dbReference type="SMR" id="Q6MJ26"/>
<dbReference type="STRING" id="264462.Bd2963"/>
<dbReference type="GeneID" id="93013826"/>
<dbReference type="KEGG" id="bba:Bd2963"/>
<dbReference type="eggNOG" id="COG0096">
    <property type="taxonomic scope" value="Bacteria"/>
</dbReference>
<dbReference type="HOGENOM" id="CLU_098428_0_2_7"/>
<dbReference type="Proteomes" id="UP000008080">
    <property type="component" value="Chromosome"/>
</dbReference>
<dbReference type="GO" id="GO:1990904">
    <property type="term" value="C:ribonucleoprotein complex"/>
    <property type="evidence" value="ECO:0007669"/>
    <property type="project" value="UniProtKB-KW"/>
</dbReference>
<dbReference type="GO" id="GO:0005840">
    <property type="term" value="C:ribosome"/>
    <property type="evidence" value="ECO:0007669"/>
    <property type="project" value="UniProtKB-KW"/>
</dbReference>
<dbReference type="GO" id="GO:0019843">
    <property type="term" value="F:rRNA binding"/>
    <property type="evidence" value="ECO:0007669"/>
    <property type="project" value="UniProtKB-UniRule"/>
</dbReference>
<dbReference type="GO" id="GO:0003735">
    <property type="term" value="F:structural constituent of ribosome"/>
    <property type="evidence" value="ECO:0007669"/>
    <property type="project" value="InterPro"/>
</dbReference>
<dbReference type="GO" id="GO:0006412">
    <property type="term" value="P:translation"/>
    <property type="evidence" value="ECO:0007669"/>
    <property type="project" value="UniProtKB-UniRule"/>
</dbReference>
<dbReference type="FunFam" id="3.30.1370.30:FF:000002">
    <property type="entry name" value="30S ribosomal protein S8"/>
    <property type="match status" value="1"/>
</dbReference>
<dbReference type="FunFam" id="3.30.1490.10:FF:000001">
    <property type="entry name" value="30S ribosomal protein S8"/>
    <property type="match status" value="1"/>
</dbReference>
<dbReference type="Gene3D" id="3.30.1370.30">
    <property type="match status" value="1"/>
</dbReference>
<dbReference type="Gene3D" id="3.30.1490.10">
    <property type="match status" value="1"/>
</dbReference>
<dbReference type="HAMAP" id="MF_01302_B">
    <property type="entry name" value="Ribosomal_uS8_B"/>
    <property type="match status" value="1"/>
</dbReference>
<dbReference type="InterPro" id="IPR000630">
    <property type="entry name" value="Ribosomal_uS8"/>
</dbReference>
<dbReference type="InterPro" id="IPR035987">
    <property type="entry name" value="Ribosomal_uS8_sf"/>
</dbReference>
<dbReference type="NCBIfam" id="NF001109">
    <property type="entry name" value="PRK00136.1"/>
    <property type="match status" value="1"/>
</dbReference>
<dbReference type="PANTHER" id="PTHR11758">
    <property type="entry name" value="40S RIBOSOMAL PROTEIN S15A"/>
    <property type="match status" value="1"/>
</dbReference>
<dbReference type="Pfam" id="PF00410">
    <property type="entry name" value="Ribosomal_S8"/>
    <property type="match status" value="1"/>
</dbReference>
<dbReference type="SUPFAM" id="SSF56047">
    <property type="entry name" value="Ribosomal protein S8"/>
    <property type="match status" value="1"/>
</dbReference>
<evidence type="ECO:0000255" key="1">
    <source>
        <dbReference type="HAMAP-Rule" id="MF_01302"/>
    </source>
</evidence>
<evidence type="ECO:0000305" key="2"/>
<organism>
    <name type="scientific">Bdellovibrio bacteriovorus (strain ATCC 15356 / DSM 50701 / NCIMB 9529 / HD100)</name>
    <dbReference type="NCBI Taxonomy" id="264462"/>
    <lineage>
        <taxon>Bacteria</taxon>
        <taxon>Pseudomonadati</taxon>
        <taxon>Bdellovibrionota</taxon>
        <taxon>Bdellovibrionia</taxon>
        <taxon>Bdellovibrionales</taxon>
        <taxon>Pseudobdellovibrionaceae</taxon>
        <taxon>Bdellovibrio</taxon>
    </lineage>
</organism>
<accession>Q6MJ26</accession>
<keyword id="KW-1185">Reference proteome</keyword>
<keyword id="KW-0687">Ribonucleoprotein</keyword>
<keyword id="KW-0689">Ribosomal protein</keyword>
<keyword id="KW-0694">RNA-binding</keyword>
<keyword id="KW-0699">rRNA-binding</keyword>
<name>RS8_BDEBA</name>
<reference key="1">
    <citation type="journal article" date="2004" name="Science">
        <title>A predator unmasked: life cycle of Bdellovibrio bacteriovorus from a genomic perspective.</title>
        <authorList>
            <person name="Rendulic S."/>
            <person name="Jagtap P."/>
            <person name="Rosinus A."/>
            <person name="Eppinger M."/>
            <person name="Baar C."/>
            <person name="Lanz C."/>
            <person name="Keller H."/>
            <person name="Lambert C."/>
            <person name="Evans K.J."/>
            <person name="Goesmann A."/>
            <person name="Meyer F."/>
            <person name="Sockett R.E."/>
            <person name="Schuster S.C."/>
        </authorList>
    </citation>
    <scope>NUCLEOTIDE SEQUENCE [LARGE SCALE GENOMIC DNA]</scope>
    <source>
        <strain>ATCC 15356 / DSM 50701 / NCIMB 9529 / HD100</strain>
    </source>
</reference>